<gene>
    <name type="primary">BGAL2</name>
    <name type="ordered locus">At3g52840</name>
    <name type="ORF">F8J2.10</name>
</gene>
<protein>
    <recommendedName>
        <fullName>Beta-galactosidase 2</fullName>
        <shortName>Lactase 2</shortName>
        <ecNumber>3.2.1.23</ecNumber>
    </recommendedName>
</protein>
<comment type="catalytic activity">
    <reaction>
        <text>Hydrolysis of terminal non-reducing beta-D-galactose residues in beta-D-galactosides.</text>
        <dbReference type="EC" id="3.2.1.23"/>
    </reaction>
</comment>
<comment type="subcellular location">
    <subcellularLocation>
        <location evidence="5">Secreted</location>
        <location evidence="5">Extracellular space</location>
        <location evidence="5">Apoplast</location>
    </subcellularLocation>
</comment>
<comment type="tissue specificity">
    <text evidence="2 4">Ubiquitous, with higher expression levels in roots and siliques.</text>
</comment>
<comment type="induction">
    <text evidence="3">By sugar starvation.</text>
</comment>
<comment type="similarity">
    <text evidence="5">Belongs to the glycosyl hydrolase 35 family.</text>
</comment>
<evidence type="ECO:0000255" key="1"/>
<evidence type="ECO:0000269" key="2">
    <source>
    </source>
</evidence>
<evidence type="ECO:0000269" key="3">
    <source>
    </source>
</evidence>
<evidence type="ECO:0000269" key="4">
    <source>
    </source>
</evidence>
<evidence type="ECO:0000305" key="5"/>
<name>BGAL2_ARATH</name>
<accession>Q9LFA6</accession>
<accession>Q8H7H7</accession>
<accession>Q9SCW0</accession>
<sequence>MSMHFRNKAWIILAILCFSSLIHSTEAVVTYDHKALIINGQRRILISGSIHYPRSTPEMWPDLIKKAKEGGLDVIQTYVFWNGHEPSPGNYYFQDRYDLVKFTKLVHQAGLYLDLRIGPYVCAEWNFGGFPVWLKYVPGMVFRTDNEPFKIAMQKFTKKIVDMMKEEKLFETQGGPIILSQIENEYGPMQWEMGAAGKAYSKWTAEMALGLSTGVPWIMCKQEDAPYPIIDTCNGFYCEGFKPNSDNKPKLWTENWTGWFTEFGGAIPNRPVEDIAFSVARFIQNGGSFMNYYMYYGGTNFDRTAGVFIATSYDYDAPIDEYGLLREPKYSHLKELHKVIKLCEPALVSVDPTITSLGDKQEIHVFKSKTSCAAFLSNYDTSSAARVMFRGFPYDLPPWSVSILPDCKTEYYNTAKIRAPTILMKMIPTSTKFSWESYNEGSPSSNEAGTFVKDGLVEQISMTRDKTDYFWYFTDITIGSDESFLKTGDNPLLTIFSAGHALHVFVNGLLAGTSYGALSNSKLTFSQNIKLSVGINKLALLSTAVGLPNAGVHYETWNTGILGPVTLKGVNSGTWDMSKWKWSYKIGLRGEAMSLHTLAGSSAVKWWIKGFVVKKQPLTWYKSSFDTPRGNEPLALDMNTMGKGQVWVNGHNIGRHWPAYTARGNCGRCNYAGIYNEKKCLSHCGEPSQRWYHVPRSWLKPFGNLLVIFEEWGGDPSGISLVKRTAK</sequence>
<dbReference type="EC" id="3.2.1.23"/>
<dbReference type="EMBL" id="AJ270298">
    <property type="protein sequence ID" value="CAB64738.1"/>
    <property type="molecule type" value="mRNA"/>
</dbReference>
<dbReference type="EMBL" id="AL132969">
    <property type="protein sequence ID" value="CAB86888.1"/>
    <property type="molecule type" value="Genomic_DNA"/>
</dbReference>
<dbReference type="EMBL" id="CP002686">
    <property type="protein sequence ID" value="AEE78999.1"/>
    <property type="molecule type" value="Genomic_DNA"/>
</dbReference>
<dbReference type="EMBL" id="AF367327">
    <property type="protein sequence ID" value="AAK32914.1"/>
    <property type="molecule type" value="mRNA"/>
</dbReference>
<dbReference type="EMBL" id="BT000511">
    <property type="protein sequence ID" value="AAN18080.1"/>
    <property type="molecule type" value="mRNA"/>
</dbReference>
<dbReference type="EMBL" id="AF083670">
    <property type="protein sequence ID" value="AAN60229.1"/>
    <property type="molecule type" value="mRNA"/>
</dbReference>
<dbReference type="PIR" id="T47541">
    <property type="entry name" value="T47541"/>
</dbReference>
<dbReference type="RefSeq" id="NP_190852.2">
    <property type="nucleotide sequence ID" value="NM_115144.4"/>
</dbReference>
<dbReference type="SMR" id="Q9LFA6"/>
<dbReference type="FunCoup" id="Q9LFA6">
    <property type="interactions" value="147"/>
</dbReference>
<dbReference type="STRING" id="3702.Q9LFA6"/>
<dbReference type="CAZy" id="GH35">
    <property type="family name" value="Glycoside Hydrolase Family 35"/>
</dbReference>
<dbReference type="GlyCosmos" id="Q9LFA6">
    <property type="glycosylation" value="1 site, No reported glycans"/>
</dbReference>
<dbReference type="GlyGen" id="Q9LFA6">
    <property type="glycosylation" value="1 site"/>
</dbReference>
<dbReference type="PaxDb" id="3702-AT3G52840.1"/>
<dbReference type="ProteomicsDB" id="240658"/>
<dbReference type="EnsemblPlants" id="AT3G52840.1">
    <property type="protein sequence ID" value="AT3G52840.1"/>
    <property type="gene ID" value="AT3G52840"/>
</dbReference>
<dbReference type="GeneID" id="824450"/>
<dbReference type="Gramene" id="AT3G52840.1">
    <property type="protein sequence ID" value="AT3G52840.1"/>
    <property type="gene ID" value="AT3G52840"/>
</dbReference>
<dbReference type="KEGG" id="ath:AT3G52840"/>
<dbReference type="Araport" id="AT3G52840"/>
<dbReference type="TAIR" id="AT3G52840">
    <property type="gene designation" value="BGAL2"/>
</dbReference>
<dbReference type="eggNOG" id="KOG0496">
    <property type="taxonomic scope" value="Eukaryota"/>
</dbReference>
<dbReference type="HOGENOM" id="CLU_007853_4_0_1"/>
<dbReference type="InParanoid" id="Q9LFA6"/>
<dbReference type="OMA" id="YPAKVMF"/>
<dbReference type="BRENDA" id="3.2.1.23">
    <property type="organism ID" value="399"/>
</dbReference>
<dbReference type="PRO" id="PR:Q9LFA6"/>
<dbReference type="Proteomes" id="UP000006548">
    <property type="component" value="Chromosome 3"/>
</dbReference>
<dbReference type="ExpressionAtlas" id="Q9LFA6">
    <property type="expression patterns" value="baseline and differential"/>
</dbReference>
<dbReference type="GO" id="GO:0048046">
    <property type="term" value="C:apoplast"/>
    <property type="evidence" value="ECO:0007005"/>
    <property type="project" value="TAIR"/>
</dbReference>
<dbReference type="GO" id="GO:0005829">
    <property type="term" value="C:cytosol"/>
    <property type="evidence" value="ECO:0007005"/>
    <property type="project" value="TAIR"/>
</dbReference>
<dbReference type="GO" id="GO:0009505">
    <property type="term" value="C:plant-type cell wall"/>
    <property type="evidence" value="ECO:0000314"/>
    <property type="project" value="TAIR"/>
</dbReference>
<dbReference type="GO" id="GO:0099503">
    <property type="term" value="C:secretory vesicle"/>
    <property type="evidence" value="ECO:0007005"/>
    <property type="project" value="TAIR"/>
</dbReference>
<dbReference type="GO" id="GO:0004565">
    <property type="term" value="F:beta-galactosidase activity"/>
    <property type="evidence" value="ECO:0007669"/>
    <property type="project" value="UniProtKB-EC"/>
</dbReference>
<dbReference type="GO" id="GO:0005975">
    <property type="term" value="P:carbohydrate metabolic process"/>
    <property type="evidence" value="ECO:0007669"/>
    <property type="project" value="InterPro"/>
</dbReference>
<dbReference type="FunFam" id="2.60.120.260:FF:000061">
    <property type="entry name" value="Beta-galactosidase"/>
    <property type="match status" value="1"/>
</dbReference>
<dbReference type="FunFam" id="2.60.120.260:FF:000076">
    <property type="entry name" value="Beta-galactosidase"/>
    <property type="match status" value="1"/>
</dbReference>
<dbReference type="FunFam" id="2.60.120.260:FF:000142">
    <property type="entry name" value="Beta-galactosidase"/>
    <property type="match status" value="1"/>
</dbReference>
<dbReference type="FunFam" id="3.20.20.80:FF:000021">
    <property type="entry name" value="Beta-galactosidase"/>
    <property type="match status" value="1"/>
</dbReference>
<dbReference type="Gene3D" id="2.60.120.260">
    <property type="entry name" value="Galactose-binding domain-like"/>
    <property type="match status" value="2"/>
</dbReference>
<dbReference type="Gene3D" id="3.20.20.80">
    <property type="entry name" value="Glycosidases"/>
    <property type="match status" value="1"/>
</dbReference>
<dbReference type="InterPro" id="IPR048913">
    <property type="entry name" value="BetaGal_gal-bd"/>
</dbReference>
<dbReference type="InterPro" id="IPR008979">
    <property type="entry name" value="Galactose-bd-like_sf"/>
</dbReference>
<dbReference type="InterPro" id="IPR041392">
    <property type="entry name" value="GHD"/>
</dbReference>
<dbReference type="InterPro" id="IPR031330">
    <property type="entry name" value="Gly_Hdrlase_35_cat"/>
</dbReference>
<dbReference type="InterPro" id="IPR019801">
    <property type="entry name" value="Glyco_hydro_35_CS"/>
</dbReference>
<dbReference type="InterPro" id="IPR001944">
    <property type="entry name" value="Glycoside_Hdrlase_35"/>
</dbReference>
<dbReference type="InterPro" id="IPR017853">
    <property type="entry name" value="Glycoside_hydrolase_SF"/>
</dbReference>
<dbReference type="PANTHER" id="PTHR23421">
    <property type="entry name" value="BETA-GALACTOSIDASE RELATED"/>
    <property type="match status" value="1"/>
</dbReference>
<dbReference type="Pfam" id="PF21467">
    <property type="entry name" value="BetaGal_gal-bd"/>
    <property type="match status" value="1"/>
</dbReference>
<dbReference type="Pfam" id="PF17834">
    <property type="entry name" value="GHD"/>
    <property type="match status" value="1"/>
</dbReference>
<dbReference type="Pfam" id="PF01301">
    <property type="entry name" value="Glyco_hydro_35"/>
    <property type="match status" value="1"/>
</dbReference>
<dbReference type="PRINTS" id="PR00742">
    <property type="entry name" value="GLHYDRLASE35"/>
</dbReference>
<dbReference type="SUPFAM" id="SSF51445">
    <property type="entry name" value="(Trans)glycosidases"/>
    <property type="match status" value="1"/>
</dbReference>
<dbReference type="SUPFAM" id="SSF49785">
    <property type="entry name" value="Galactose-binding domain-like"/>
    <property type="match status" value="2"/>
</dbReference>
<dbReference type="PROSITE" id="PS01182">
    <property type="entry name" value="GLYCOSYL_HYDROL_F35"/>
    <property type="match status" value="1"/>
</dbReference>
<keyword id="KW-0052">Apoplast</keyword>
<keyword id="KW-0325">Glycoprotein</keyword>
<keyword id="KW-0326">Glycosidase</keyword>
<keyword id="KW-0378">Hydrolase</keyword>
<keyword id="KW-1185">Reference proteome</keyword>
<keyword id="KW-0964">Secreted</keyword>
<keyword id="KW-0732">Signal</keyword>
<proteinExistence type="evidence at transcript level"/>
<feature type="signal peptide" evidence="1">
    <location>
        <begin position="1"/>
        <end position="27"/>
    </location>
</feature>
<feature type="chain" id="PRO_5000065878" description="Beta-galactosidase 2">
    <location>
        <begin position="28"/>
        <end position="727"/>
    </location>
</feature>
<feature type="active site" description="Proton donor" evidence="1">
    <location>
        <position position="185"/>
    </location>
</feature>
<feature type="active site" description="Nucleophile" evidence="1">
    <location>
        <position position="254"/>
    </location>
</feature>
<feature type="glycosylation site" description="N-linked (GlcNAc...) asparagine" evidence="1">
    <location>
        <position position="255"/>
    </location>
</feature>
<feature type="sequence conflict" description="In Ref. 5; AAN60229." evidence="5" ref="5">
    <original>I</original>
    <variation>F</variation>
    <location>
        <position position="12"/>
    </location>
</feature>
<feature type="sequence conflict" description="In Ref. 2; CAB86888." evidence="5" ref="2">
    <original>C</original>
    <variation>S</variation>
    <location>
        <position position="220"/>
    </location>
</feature>
<reference key="1">
    <citation type="submission" date="1999-10" db="EMBL/GenBank/DDBJ databases">
        <title>The beta-galactosidases are encoding by a multigene family in Arabidopsis thaliana.</title>
        <authorList>
            <person name="Gy I."/>
            <person name="Kreis M."/>
            <person name="Lecharny A."/>
        </authorList>
    </citation>
    <scope>NUCLEOTIDE SEQUENCE [MRNA]</scope>
</reference>
<reference key="2">
    <citation type="journal article" date="2000" name="Nature">
        <title>Sequence and analysis of chromosome 3 of the plant Arabidopsis thaliana.</title>
        <authorList>
            <person name="Salanoubat M."/>
            <person name="Lemcke K."/>
            <person name="Rieger M."/>
            <person name="Ansorge W."/>
            <person name="Unseld M."/>
            <person name="Fartmann B."/>
            <person name="Valle G."/>
            <person name="Bloecker H."/>
            <person name="Perez-Alonso M."/>
            <person name="Obermaier B."/>
            <person name="Delseny M."/>
            <person name="Boutry M."/>
            <person name="Grivell L.A."/>
            <person name="Mache R."/>
            <person name="Puigdomenech P."/>
            <person name="De Simone V."/>
            <person name="Choisne N."/>
            <person name="Artiguenave F."/>
            <person name="Robert C."/>
            <person name="Brottier P."/>
            <person name="Wincker P."/>
            <person name="Cattolico L."/>
            <person name="Weissenbach J."/>
            <person name="Saurin W."/>
            <person name="Quetier F."/>
            <person name="Schaefer M."/>
            <person name="Mueller-Auer S."/>
            <person name="Gabel C."/>
            <person name="Fuchs M."/>
            <person name="Benes V."/>
            <person name="Wurmbach E."/>
            <person name="Drzonek H."/>
            <person name="Erfle H."/>
            <person name="Jordan N."/>
            <person name="Bangert S."/>
            <person name="Wiedelmann R."/>
            <person name="Kranz H."/>
            <person name="Voss H."/>
            <person name="Holland R."/>
            <person name="Brandt P."/>
            <person name="Nyakatura G."/>
            <person name="Vezzi A."/>
            <person name="D'Angelo M."/>
            <person name="Pallavicini A."/>
            <person name="Toppo S."/>
            <person name="Simionati B."/>
            <person name="Conrad A."/>
            <person name="Hornischer K."/>
            <person name="Kauer G."/>
            <person name="Loehnert T.-H."/>
            <person name="Nordsiek G."/>
            <person name="Reichelt J."/>
            <person name="Scharfe M."/>
            <person name="Schoen O."/>
            <person name="Bargues M."/>
            <person name="Terol J."/>
            <person name="Climent J."/>
            <person name="Navarro P."/>
            <person name="Collado C."/>
            <person name="Perez-Perez A."/>
            <person name="Ottenwaelder B."/>
            <person name="Duchemin D."/>
            <person name="Cooke R."/>
            <person name="Laudie M."/>
            <person name="Berger-Llauro C."/>
            <person name="Purnelle B."/>
            <person name="Masuy D."/>
            <person name="de Haan M."/>
            <person name="Maarse A.C."/>
            <person name="Alcaraz J.-P."/>
            <person name="Cottet A."/>
            <person name="Casacuberta E."/>
            <person name="Monfort A."/>
            <person name="Argiriou A."/>
            <person name="Flores M."/>
            <person name="Liguori R."/>
            <person name="Vitale D."/>
            <person name="Mannhaupt G."/>
            <person name="Haase D."/>
            <person name="Schoof H."/>
            <person name="Rudd S."/>
            <person name="Zaccaria P."/>
            <person name="Mewes H.-W."/>
            <person name="Mayer K.F.X."/>
            <person name="Kaul S."/>
            <person name="Town C.D."/>
            <person name="Koo H.L."/>
            <person name="Tallon L.J."/>
            <person name="Jenkins J."/>
            <person name="Rooney T."/>
            <person name="Rizzo M."/>
            <person name="Walts A."/>
            <person name="Utterback T."/>
            <person name="Fujii C.Y."/>
            <person name="Shea T.P."/>
            <person name="Creasy T.H."/>
            <person name="Haas B."/>
            <person name="Maiti R."/>
            <person name="Wu D."/>
            <person name="Peterson J."/>
            <person name="Van Aken S."/>
            <person name="Pai G."/>
            <person name="Militscher J."/>
            <person name="Sellers P."/>
            <person name="Gill J.E."/>
            <person name="Feldblyum T.V."/>
            <person name="Preuss D."/>
            <person name="Lin X."/>
            <person name="Nierman W.C."/>
            <person name="Salzberg S.L."/>
            <person name="White O."/>
            <person name="Venter J.C."/>
            <person name="Fraser C.M."/>
            <person name="Kaneko T."/>
            <person name="Nakamura Y."/>
            <person name="Sato S."/>
            <person name="Kato T."/>
            <person name="Asamizu E."/>
            <person name="Sasamoto S."/>
            <person name="Kimura T."/>
            <person name="Idesawa K."/>
            <person name="Kawashima K."/>
            <person name="Kishida Y."/>
            <person name="Kiyokawa C."/>
            <person name="Kohara M."/>
            <person name="Matsumoto M."/>
            <person name="Matsuno A."/>
            <person name="Muraki A."/>
            <person name="Nakayama S."/>
            <person name="Nakazaki N."/>
            <person name="Shinpo S."/>
            <person name="Takeuchi C."/>
            <person name="Wada T."/>
            <person name="Watanabe A."/>
            <person name="Yamada M."/>
            <person name="Yasuda M."/>
            <person name="Tabata S."/>
        </authorList>
    </citation>
    <scope>NUCLEOTIDE SEQUENCE [LARGE SCALE GENOMIC DNA]</scope>
    <source>
        <strain>cv. Columbia</strain>
    </source>
</reference>
<reference key="3">
    <citation type="journal article" date="2017" name="Plant J.">
        <title>Araport11: a complete reannotation of the Arabidopsis thaliana reference genome.</title>
        <authorList>
            <person name="Cheng C.Y."/>
            <person name="Krishnakumar V."/>
            <person name="Chan A.P."/>
            <person name="Thibaud-Nissen F."/>
            <person name="Schobel S."/>
            <person name="Town C.D."/>
        </authorList>
    </citation>
    <scope>GENOME REANNOTATION</scope>
    <source>
        <strain>cv. Columbia</strain>
    </source>
</reference>
<reference key="4">
    <citation type="journal article" date="2003" name="Science">
        <title>Empirical analysis of transcriptional activity in the Arabidopsis genome.</title>
        <authorList>
            <person name="Yamada K."/>
            <person name="Lim J."/>
            <person name="Dale J.M."/>
            <person name="Chen H."/>
            <person name="Shinn P."/>
            <person name="Palm C.J."/>
            <person name="Southwick A.M."/>
            <person name="Wu H.C."/>
            <person name="Kim C.J."/>
            <person name="Nguyen M."/>
            <person name="Pham P.K."/>
            <person name="Cheuk R.F."/>
            <person name="Karlin-Newmann G."/>
            <person name="Liu S.X."/>
            <person name="Lam B."/>
            <person name="Sakano H."/>
            <person name="Wu T."/>
            <person name="Yu G."/>
            <person name="Miranda M."/>
            <person name="Quach H.L."/>
            <person name="Tripp M."/>
            <person name="Chang C.H."/>
            <person name="Lee J.M."/>
            <person name="Toriumi M.J."/>
            <person name="Chan M.M."/>
            <person name="Tang C.C."/>
            <person name="Onodera C.S."/>
            <person name="Deng J.M."/>
            <person name="Akiyama K."/>
            <person name="Ansari Y."/>
            <person name="Arakawa T."/>
            <person name="Banh J."/>
            <person name="Banno F."/>
            <person name="Bowser L."/>
            <person name="Brooks S.Y."/>
            <person name="Carninci P."/>
            <person name="Chao Q."/>
            <person name="Choy N."/>
            <person name="Enju A."/>
            <person name="Goldsmith A.D."/>
            <person name="Gurjal M."/>
            <person name="Hansen N.F."/>
            <person name="Hayashizaki Y."/>
            <person name="Johnson-Hopson C."/>
            <person name="Hsuan V.W."/>
            <person name="Iida K."/>
            <person name="Karnes M."/>
            <person name="Khan S."/>
            <person name="Koesema E."/>
            <person name="Ishida J."/>
            <person name="Jiang P.X."/>
            <person name="Jones T."/>
            <person name="Kawai J."/>
            <person name="Kamiya A."/>
            <person name="Meyers C."/>
            <person name="Nakajima M."/>
            <person name="Narusaka M."/>
            <person name="Seki M."/>
            <person name="Sakurai T."/>
            <person name="Satou M."/>
            <person name="Tamse R."/>
            <person name="Vaysberg M."/>
            <person name="Wallender E.K."/>
            <person name="Wong C."/>
            <person name="Yamamura Y."/>
            <person name="Yuan S."/>
            <person name="Shinozaki K."/>
            <person name="Davis R.W."/>
            <person name="Theologis A."/>
            <person name="Ecker J.R."/>
        </authorList>
    </citation>
    <scope>NUCLEOTIDE SEQUENCE [LARGE SCALE MRNA]</scope>
    <source>
        <strain>cv. Columbia</strain>
    </source>
</reference>
<reference key="5">
    <citation type="submission" date="1998-08" db="EMBL/GenBank/DDBJ databases">
        <title>Signal peptide selection derived cDNAs from Arabidopsis thaliana leaves and guard cells.</title>
        <authorList>
            <person name="Stracke R."/>
            <person name="Palme K."/>
        </authorList>
    </citation>
    <scope>NUCLEOTIDE SEQUENCE [LARGE SCALE MRNA] OF 1-569</scope>
</reference>
<reference key="6">
    <citation type="journal article" date="2006" name="Plant Cell Physiol.">
        <title>Apoplastic glycosidases active against xyloglucan oligosaccharides of Arabidopsis thaliana.</title>
        <authorList>
            <person name="Iglesias N."/>
            <person name="Abelenda J.A."/>
            <person name="Rodino M."/>
            <person name="Sampedro J."/>
            <person name="Revilla G."/>
            <person name="Zarra I."/>
        </authorList>
    </citation>
    <scope>TISSUE SPECIFICITY</scope>
</reference>
<reference key="7">
    <citation type="journal article" date="2007" name="Phytochemistry">
        <title>Functional genomic analysis of Arabidopsis thaliana glycoside hydrolase family 35.</title>
        <authorList>
            <person name="Ahn Y.O."/>
            <person name="Zheng M."/>
            <person name="Bevan D.R."/>
            <person name="Esen A."/>
            <person name="Shiu S.-H."/>
            <person name="Benson J."/>
            <person name="Peng H.-P."/>
            <person name="Miller J.T."/>
            <person name="Cheng C.-L."/>
            <person name="Poulton J.E."/>
            <person name="Shih M.-C."/>
        </authorList>
    </citation>
    <scope>TISSUE SPECIFICITY</scope>
    <scope>GENE FAMILY</scope>
    <scope>NOMENCLATURE</scope>
</reference>
<reference key="8">
    <citation type="journal article" date="2007" name="Plant Cell Physiol.">
        <title>Glycosyl hydrolases of cell wall are induced by sugar starvation in Arabidopsis.</title>
        <authorList>
            <person name="Lee E.-J."/>
            <person name="Matsumura Y."/>
            <person name="Soga K."/>
            <person name="Hoson T."/>
            <person name="Koizumi N."/>
        </authorList>
    </citation>
    <scope>INDUCTION</scope>
</reference>
<organism>
    <name type="scientific">Arabidopsis thaliana</name>
    <name type="common">Mouse-ear cress</name>
    <dbReference type="NCBI Taxonomy" id="3702"/>
    <lineage>
        <taxon>Eukaryota</taxon>
        <taxon>Viridiplantae</taxon>
        <taxon>Streptophyta</taxon>
        <taxon>Embryophyta</taxon>
        <taxon>Tracheophyta</taxon>
        <taxon>Spermatophyta</taxon>
        <taxon>Magnoliopsida</taxon>
        <taxon>eudicotyledons</taxon>
        <taxon>Gunneridae</taxon>
        <taxon>Pentapetalae</taxon>
        <taxon>rosids</taxon>
        <taxon>malvids</taxon>
        <taxon>Brassicales</taxon>
        <taxon>Brassicaceae</taxon>
        <taxon>Camelineae</taxon>
        <taxon>Arabidopsis</taxon>
    </lineage>
</organism>